<keyword id="KW-1003">Cell membrane</keyword>
<keyword id="KW-0285">Flavoprotein</keyword>
<keyword id="KW-0288">FMN</keyword>
<keyword id="KW-0472">Membrane</keyword>
<keyword id="KW-0560">Oxidoreductase</keyword>
<keyword id="KW-0665">Pyrimidine biosynthesis</keyword>
<proteinExistence type="inferred from homology"/>
<dbReference type="EC" id="1.3.5.2" evidence="1"/>
<dbReference type="EMBL" id="CP000890">
    <property type="protein sequence ID" value="ABX77604.1"/>
    <property type="molecule type" value="Genomic_DNA"/>
</dbReference>
<dbReference type="RefSeq" id="WP_005768550.1">
    <property type="nucleotide sequence ID" value="NC_010117.1"/>
</dbReference>
<dbReference type="SMR" id="A9NCV1"/>
<dbReference type="KEGG" id="cbs:COXBURSA331_A0969"/>
<dbReference type="HOGENOM" id="CLU_013640_2_0_6"/>
<dbReference type="UniPathway" id="UPA00070">
    <property type="reaction ID" value="UER00946"/>
</dbReference>
<dbReference type="GO" id="GO:0005737">
    <property type="term" value="C:cytoplasm"/>
    <property type="evidence" value="ECO:0007669"/>
    <property type="project" value="InterPro"/>
</dbReference>
<dbReference type="GO" id="GO:0005886">
    <property type="term" value="C:plasma membrane"/>
    <property type="evidence" value="ECO:0007669"/>
    <property type="project" value="UniProtKB-SubCell"/>
</dbReference>
<dbReference type="GO" id="GO:0106430">
    <property type="term" value="F:dihydroorotate dehydrogenase (quinone) activity"/>
    <property type="evidence" value="ECO:0007669"/>
    <property type="project" value="UniProtKB-EC"/>
</dbReference>
<dbReference type="GO" id="GO:0006207">
    <property type="term" value="P:'de novo' pyrimidine nucleobase biosynthetic process"/>
    <property type="evidence" value="ECO:0007669"/>
    <property type="project" value="InterPro"/>
</dbReference>
<dbReference type="GO" id="GO:0044205">
    <property type="term" value="P:'de novo' UMP biosynthetic process"/>
    <property type="evidence" value="ECO:0007669"/>
    <property type="project" value="UniProtKB-UniRule"/>
</dbReference>
<dbReference type="CDD" id="cd04738">
    <property type="entry name" value="DHOD_2_like"/>
    <property type="match status" value="1"/>
</dbReference>
<dbReference type="FunFam" id="3.20.20.70:FF:000028">
    <property type="entry name" value="Dihydroorotate dehydrogenase (quinone)"/>
    <property type="match status" value="1"/>
</dbReference>
<dbReference type="Gene3D" id="3.20.20.70">
    <property type="entry name" value="Aldolase class I"/>
    <property type="match status" value="1"/>
</dbReference>
<dbReference type="HAMAP" id="MF_00225">
    <property type="entry name" value="DHO_dh_type2"/>
    <property type="match status" value="1"/>
</dbReference>
<dbReference type="InterPro" id="IPR013785">
    <property type="entry name" value="Aldolase_TIM"/>
</dbReference>
<dbReference type="InterPro" id="IPR050074">
    <property type="entry name" value="DHO_dehydrogenase"/>
</dbReference>
<dbReference type="InterPro" id="IPR012135">
    <property type="entry name" value="Dihydroorotate_DH_1_2"/>
</dbReference>
<dbReference type="InterPro" id="IPR005719">
    <property type="entry name" value="Dihydroorotate_DH_2"/>
</dbReference>
<dbReference type="InterPro" id="IPR005720">
    <property type="entry name" value="Dihydroorotate_DH_cat"/>
</dbReference>
<dbReference type="InterPro" id="IPR001295">
    <property type="entry name" value="Dihydroorotate_DH_CS"/>
</dbReference>
<dbReference type="NCBIfam" id="NF003644">
    <property type="entry name" value="PRK05286.1-1"/>
    <property type="match status" value="1"/>
</dbReference>
<dbReference type="NCBIfam" id="NF003645">
    <property type="entry name" value="PRK05286.1-2"/>
    <property type="match status" value="1"/>
</dbReference>
<dbReference type="NCBIfam" id="NF003646">
    <property type="entry name" value="PRK05286.1-4"/>
    <property type="match status" value="1"/>
</dbReference>
<dbReference type="NCBIfam" id="NF003652">
    <property type="entry name" value="PRK05286.2-5"/>
    <property type="match status" value="1"/>
</dbReference>
<dbReference type="NCBIfam" id="TIGR01036">
    <property type="entry name" value="pyrD_sub2"/>
    <property type="match status" value="1"/>
</dbReference>
<dbReference type="PANTHER" id="PTHR48109:SF4">
    <property type="entry name" value="DIHYDROOROTATE DEHYDROGENASE (QUINONE), MITOCHONDRIAL"/>
    <property type="match status" value="1"/>
</dbReference>
<dbReference type="PANTHER" id="PTHR48109">
    <property type="entry name" value="DIHYDROOROTATE DEHYDROGENASE (QUINONE), MITOCHONDRIAL-RELATED"/>
    <property type="match status" value="1"/>
</dbReference>
<dbReference type="Pfam" id="PF01180">
    <property type="entry name" value="DHO_dh"/>
    <property type="match status" value="1"/>
</dbReference>
<dbReference type="PIRSF" id="PIRSF000164">
    <property type="entry name" value="DHO_oxidase"/>
    <property type="match status" value="1"/>
</dbReference>
<dbReference type="SUPFAM" id="SSF51395">
    <property type="entry name" value="FMN-linked oxidoreductases"/>
    <property type="match status" value="1"/>
</dbReference>
<dbReference type="PROSITE" id="PS00911">
    <property type="entry name" value="DHODEHASE_1"/>
    <property type="match status" value="1"/>
</dbReference>
<dbReference type="PROSITE" id="PS00912">
    <property type="entry name" value="DHODEHASE_2"/>
    <property type="match status" value="1"/>
</dbReference>
<reference key="1">
    <citation type="submission" date="2007-11" db="EMBL/GenBank/DDBJ databases">
        <title>Genome sequencing of phylogenetically and phenotypically diverse Coxiella burnetii isolates.</title>
        <authorList>
            <person name="Seshadri R."/>
            <person name="Samuel J.E."/>
        </authorList>
    </citation>
    <scope>NUCLEOTIDE SEQUENCE [LARGE SCALE GENOMIC DNA]</scope>
    <source>
        <strain>RSA 331 / Henzerling II</strain>
    </source>
</reference>
<name>PYRD_COXBR</name>
<accession>A9NCV1</accession>
<organism>
    <name type="scientific">Coxiella burnetii (strain RSA 331 / Henzerling II)</name>
    <dbReference type="NCBI Taxonomy" id="360115"/>
    <lineage>
        <taxon>Bacteria</taxon>
        <taxon>Pseudomonadati</taxon>
        <taxon>Pseudomonadota</taxon>
        <taxon>Gammaproteobacteria</taxon>
        <taxon>Legionellales</taxon>
        <taxon>Coxiellaceae</taxon>
        <taxon>Coxiella</taxon>
    </lineage>
</organism>
<evidence type="ECO:0000255" key="1">
    <source>
        <dbReference type="HAMAP-Rule" id="MF_00225"/>
    </source>
</evidence>
<protein>
    <recommendedName>
        <fullName evidence="1">Dihydroorotate dehydrogenase (quinone)</fullName>
        <ecNumber evidence="1">1.3.5.2</ecNumber>
    </recommendedName>
    <alternativeName>
        <fullName evidence="1">DHOdehase</fullName>
        <shortName evidence="1">DHOD</shortName>
        <shortName evidence="1">DHODase</shortName>
    </alternativeName>
    <alternativeName>
        <fullName evidence="1">Dihydroorotate oxidase</fullName>
    </alternativeName>
</protein>
<gene>
    <name evidence="1" type="primary">pyrD</name>
    <name type="ordered locus">COXBURSA331_A0969</name>
</gene>
<feature type="chain" id="PRO_1000078157" description="Dihydroorotate dehydrogenase (quinone)">
    <location>
        <begin position="1"/>
        <end position="347"/>
    </location>
</feature>
<feature type="active site" description="Nucleophile" evidence="1">
    <location>
        <position position="175"/>
    </location>
</feature>
<feature type="binding site" evidence="1">
    <location>
        <begin position="62"/>
        <end position="66"/>
    </location>
    <ligand>
        <name>FMN</name>
        <dbReference type="ChEBI" id="CHEBI:58210"/>
    </ligand>
</feature>
<feature type="binding site" evidence="1">
    <location>
        <position position="66"/>
    </location>
    <ligand>
        <name>substrate</name>
    </ligand>
</feature>
<feature type="binding site" evidence="1">
    <location>
        <position position="86"/>
    </location>
    <ligand>
        <name>FMN</name>
        <dbReference type="ChEBI" id="CHEBI:58210"/>
    </ligand>
</feature>
<feature type="binding site" evidence="1">
    <location>
        <begin position="111"/>
        <end position="115"/>
    </location>
    <ligand>
        <name>substrate</name>
    </ligand>
</feature>
<feature type="binding site" evidence="1">
    <location>
        <position position="139"/>
    </location>
    <ligand>
        <name>FMN</name>
        <dbReference type="ChEBI" id="CHEBI:58210"/>
    </ligand>
</feature>
<feature type="binding site" evidence="1">
    <location>
        <position position="172"/>
    </location>
    <ligand>
        <name>FMN</name>
        <dbReference type="ChEBI" id="CHEBI:58210"/>
    </ligand>
</feature>
<feature type="binding site" evidence="1">
    <location>
        <position position="172"/>
    </location>
    <ligand>
        <name>substrate</name>
    </ligand>
</feature>
<feature type="binding site" evidence="1">
    <location>
        <position position="177"/>
    </location>
    <ligand>
        <name>substrate</name>
    </ligand>
</feature>
<feature type="binding site" evidence="1">
    <location>
        <position position="217"/>
    </location>
    <ligand>
        <name>FMN</name>
        <dbReference type="ChEBI" id="CHEBI:58210"/>
    </ligand>
</feature>
<feature type="binding site" evidence="1">
    <location>
        <position position="245"/>
    </location>
    <ligand>
        <name>FMN</name>
        <dbReference type="ChEBI" id="CHEBI:58210"/>
    </ligand>
</feature>
<feature type="binding site" evidence="1">
    <location>
        <begin position="246"/>
        <end position="247"/>
    </location>
    <ligand>
        <name>substrate</name>
    </ligand>
</feature>
<feature type="binding site" evidence="1">
    <location>
        <position position="268"/>
    </location>
    <ligand>
        <name>FMN</name>
        <dbReference type="ChEBI" id="CHEBI:58210"/>
    </ligand>
</feature>
<feature type="binding site" evidence="1">
    <location>
        <position position="297"/>
    </location>
    <ligand>
        <name>FMN</name>
        <dbReference type="ChEBI" id="CHEBI:58210"/>
    </ligand>
</feature>
<feature type="binding site" evidence="1">
    <location>
        <begin position="318"/>
        <end position="319"/>
    </location>
    <ligand>
        <name>FMN</name>
        <dbReference type="ChEBI" id="CHEBI:58210"/>
    </ligand>
</feature>
<sequence>MIYRYLRPWLFKLEPETAHALTLNCLKWFYCYWLINRRLQRFPQKPTVVFGIEFPNPVGLAAGLDKNGEYMDELLGLGFGFIEVGAVTPKPQPGNSKPRIFRLPQARALINRMGFNNLGVDYLVEQLKRRKVKGIVGVNIGKNLTTPLEKAHEDYQNCFEKLYSYVDYVTINISSPNTPELRQLQSERYLADLLTRLKEDQRRLEDQYHKRVPLFLKIAPDLTPEEIQTIATLALQHRIEGIVATNTSCSRQGTEKLPNANEAGGLSGKPLFPMTLQVVKQLHSFLGDEIPIVAVGGIFSGENAQTLINAGARLVQLYTGLIYEGPELVKNIVEFLTLSRQTREGIN</sequence>
<comment type="function">
    <text evidence="1">Catalyzes the conversion of dihydroorotate to orotate with quinone as electron acceptor.</text>
</comment>
<comment type="catalytic activity">
    <reaction evidence="1">
        <text>(S)-dihydroorotate + a quinone = orotate + a quinol</text>
        <dbReference type="Rhea" id="RHEA:30187"/>
        <dbReference type="ChEBI" id="CHEBI:24646"/>
        <dbReference type="ChEBI" id="CHEBI:30839"/>
        <dbReference type="ChEBI" id="CHEBI:30864"/>
        <dbReference type="ChEBI" id="CHEBI:132124"/>
        <dbReference type="EC" id="1.3.5.2"/>
    </reaction>
</comment>
<comment type="cofactor">
    <cofactor evidence="1">
        <name>FMN</name>
        <dbReference type="ChEBI" id="CHEBI:58210"/>
    </cofactor>
    <text evidence="1">Binds 1 FMN per subunit.</text>
</comment>
<comment type="pathway">
    <text evidence="1">Pyrimidine metabolism; UMP biosynthesis via de novo pathway; orotate from (S)-dihydroorotate (quinone route): step 1/1.</text>
</comment>
<comment type="subunit">
    <text evidence="1">Monomer.</text>
</comment>
<comment type="subcellular location">
    <subcellularLocation>
        <location evidence="1">Cell membrane</location>
        <topology evidence="1">Peripheral membrane protein</topology>
    </subcellularLocation>
</comment>
<comment type="similarity">
    <text evidence="1">Belongs to the dihydroorotate dehydrogenase family. Type 2 subfamily.</text>
</comment>